<accession>Q29BL9</accession>
<gene>
    <name type="ORF">GA20843</name>
</gene>
<comment type="subcellular location">
    <subcellularLocation>
        <location evidence="3">Membrane</location>
        <topology evidence="3">Multi-pass membrane protein</topology>
    </subcellularLocation>
</comment>
<comment type="similarity">
    <text evidence="3">Belongs to the LIMR family.</text>
</comment>
<evidence type="ECO:0000255" key="1"/>
<evidence type="ECO:0000256" key="2">
    <source>
        <dbReference type="SAM" id="MobiDB-lite"/>
    </source>
</evidence>
<evidence type="ECO:0000305" key="3"/>
<name>LMBD2_DROPS</name>
<proteinExistence type="inferred from homology"/>
<feature type="chain" id="PRO_0000299169" description="LMBR1 domain-containing protein 2 homolog">
    <location>
        <begin position="1"/>
        <end position="699"/>
    </location>
</feature>
<feature type="topological domain" description="Extracellular" evidence="1">
    <location>
        <begin position="1"/>
        <end position="3"/>
    </location>
</feature>
<feature type="transmembrane region" description="Helical" evidence="1">
    <location>
        <begin position="4"/>
        <end position="26"/>
    </location>
</feature>
<feature type="topological domain" description="Cytoplasmic" evidence="1">
    <location>
        <begin position="27"/>
        <end position="30"/>
    </location>
</feature>
<feature type="transmembrane region" description="Helical" evidence="1">
    <location>
        <begin position="31"/>
        <end position="51"/>
    </location>
</feature>
<feature type="topological domain" description="Extracellular" evidence="1">
    <location>
        <begin position="52"/>
        <end position="106"/>
    </location>
</feature>
<feature type="transmembrane region" description="Helical" evidence="1">
    <location>
        <begin position="107"/>
        <end position="127"/>
    </location>
</feature>
<feature type="topological domain" description="Cytoplasmic" evidence="1">
    <location>
        <begin position="128"/>
        <end position="144"/>
    </location>
</feature>
<feature type="transmembrane region" description="Helical" evidence="1">
    <location>
        <begin position="145"/>
        <end position="165"/>
    </location>
</feature>
<feature type="topological domain" description="Extracellular" evidence="1">
    <location>
        <begin position="166"/>
        <end position="181"/>
    </location>
</feature>
<feature type="transmembrane region" description="Helical" evidence="1">
    <location>
        <begin position="182"/>
        <end position="202"/>
    </location>
</feature>
<feature type="topological domain" description="Cytoplasmic" evidence="1">
    <location>
        <begin position="203"/>
        <end position="381"/>
    </location>
</feature>
<feature type="transmembrane region" description="Helical" evidence="1">
    <location>
        <begin position="382"/>
        <end position="402"/>
    </location>
</feature>
<feature type="topological domain" description="Extracellular" evidence="1">
    <location>
        <begin position="403"/>
        <end position="426"/>
    </location>
</feature>
<feature type="transmembrane region" description="Helical" evidence="1">
    <location>
        <begin position="427"/>
        <end position="447"/>
    </location>
</feature>
<feature type="topological domain" description="Cytoplasmic" evidence="1">
    <location>
        <begin position="448"/>
        <end position="467"/>
    </location>
</feature>
<feature type="transmembrane region" description="Helical" evidence="1">
    <location>
        <begin position="468"/>
        <end position="488"/>
    </location>
</feature>
<feature type="topological domain" description="Extracellular" evidence="1">
    <location>
        <begin position="489"/>
        <end position="514"/>
    </location>
</feature>
<feature type="transmembrane region" description="Helical" evidence="1">
    <location>
        <begin position="515"/>
        <end position="535"/>
    </location>
</feature>
<feature type="topological domain" description="Cytoplasmic" evidence="1">
    <location>
        <begin position="536"/>
        <end position="699"/>
    </location>
</feature>
<feature type="region of interest" description="Disordered" evidence="2">
    <location>
        <begin position="669"/>
        <end position="699"/>
    </location>
</feature>
<feature type="coiled-coil region" evidence="1">
    <location>
        <begin position="564"/>
        <end position="592"/>
    </location>
</feature>
<feature type="glycosylation site" description="N-linked (GlcNAc...) asparagine" evidence="1">
    <location>
        <position position="76"/>
    </location>
</feature>
<organism>
    <name type="scientific">Drosophila pseudoobscura pseudoobscura</name>
    <name type="common">Fruit fly</name>
    <dbReference type="NCBI Taxonomy" id="46245"/>
    <lineage>
        <taxon>Eukaryota</taxon>
        <taxon>Metazoa</taxon>
        <taxon>Ecdysozoa</taxon>
        <taxon>Arthropoda</taxon>
        <taxon>Hexapoda</taxon>
        <taxon>Insecta</taxon>
        <taxon>Pterygota</taxon>
        <taxon>Neoptera</taxon>
        <taxon>Endopterygota</taxon>
        <taxon>Diptera</taxon>
        <taxon>Brachycera</taxon>
        <taxon>Muscomorpha</taxon>
        <taxon>Ephydroidea</taxon>
        <taxon>Drosophilidae</taxon>
        <taxon>Drosophila</taxon>
        <taxon>Sophophora</taxon>
    </lineage>
</organism>
<protein>
    <recommendedName>
        <fullName>LMBR1 domain-containing protein 2 homolog</fullName>
    </recommendedName>
</protein>
<reference key="1">
    <citation type="journal article" date="2005" name="Genome Res.">
        <title>Comparative genome sequencing of Drosophila pseudoobscura: chromosomal, gene, and cis-element evolution.</title>
        <authorList>
            <person name="Richards S."/>
            <person name="Liu Y."/>
            <person name="Bettencourt B.R."/>
            <person name="Hradecky P."/>
            <person name="Letovsky S."/>
            <person name="Nielsen R."/>
            <person name="Thornton K."/>
            <person name="Hubisz M.J."/>
            <person name="Chen R."/>
            <person name="Meisel R.P."/>
            <person name="Couronne O."/>
            <person name="Hua S."/>
            <person name="Smith M.A."/>
            <person name="Zhang P."/>
            <person name="Liu J."/>
            <person name="Bussemaker H.J."/>
            <person name="van Batenburg M.F."/>
            <person name="Howells S.L."/>
            <person name="Scherer S.E."/>
            <person name="Sodergren E."/>
            <person name="Matthews B.B."/>
            <person name="Crosby M.A."/>
            <person name="Schroeder A.J."/>
            <person name="Ortiz-Barrientos D."/>
            <person name="Rives C.M."/>
            <person name="Metzker M.L."/>
            <person name="Muzny D.M."/>
            <person name="Scott G."/>
            <person name="Steffen D."/>
            <person name="Wheeler D.A."/>
            <person name="Worley K.C."/>
            <person name="Havlak P."/>
            <person name="Durbin K.J."/>
            <person name="Egan A."/>
            <person name="Gill R."/>
            <person name="Hume J."/>
            <person name="Morgan M.B."/>
            <person name="Miner G."/>
            <person name="Hamilton C."/>
            <person name="Huang Y."/>
            <person name="Waldron L."/>
            <person name="Verduzco D."/>
            <person name="Clerc-Blankenburg K.P."/>
            <person name="Dubchak I."/>
            <person name="Noor M.A.F."/>
            <person name="Anderson W."/>
            <person name="White K.P."/>
            <person name="Clark A.G."/>
            <person name="Schaeffer S.W."/>
            <person name="Gelbart W.M."/>
            <person name="Weinstock G.M."/>
            <person name="Gibbs R.A."/>
        </authorList>
    </citation>
    <scope>NUCLEOTIDE SEQUENCE [LARGE SCALE GENOMIC DNA]</scope>
    <source>
        <strain>MV2-25 / Tucson 14011-0121.94</strain>
    </source>
</reference>
<sequence length="699" mass="79282">MAYLLTFGIIAALCLASISLYRYGNIPRQHILVTLSVLTAWCFSFLIVFTIPLDVTSTLYRQCLAEHKLALDAAGNASTTANITPPPECQEPWGMVPESVFPNLWRIIYWSSQFLTWLIMPLMQSYLKAGDFTIKGKLKSALIENAIYYGSYLFICGVLLIYIAVKGVPLDWQKLKAIASSASNTWGLFLLILLLGYALVEVPRSLWNNAKPGFTLQYAYFKAAKLSTDKAEAEEHVDDILESLQCISRVVPNNHELRPCVETIMRKVPIELQERASRNFSRTGGSGMGATSSTILPSEKALVRIHKQVIKSLQTLQRTEALWSVQVDTVLHLEDVARNIHSAERRFKSEFPRQRTQLERIFYSATLQWYWECLLKAPFLKTLCVVTATMSAMVVWSEVTFFSRDPVLSIFANVIYLAKESYDFFTIEVFSMMVLCYFFYCTYSTILRIRFLNLYYLAPHHQTNEHSLIFSGMLLCRLTPPMCLNFLGLIHMDSHIIPERMMETYYTRIMGHMDVIGIISNGFNIYFPMCMLAFCLSTWFSLGSRALNALGFQQFLQNETIATELVQEGKDLIAREKRRRQRAEEAMARRRDFNRPDPTVASNDYMNKYRSGAGALAGSRTPADGLLRDGDGSFDYAAVASSSALGVPRSLSEEINDRFGVSTQMQVGFRGTSELDPDYEAENERRIVGPPPRGLFDDV</sequence>
<dbReference type="EMBL" id="CM000070">
    <property type="protein sequence ID" value="EAL26978.1"/>
    <property type="molecule type" value="Genomic_DNA"/>
</dbReference>
<dbReference type="SMR" id="Q29BL9"/>
<dbReference type="FunCoup" id="Q29BL9">
    <property type="interactions" value="1383"/>
</dbReference>
<dbReference type="STRING" id="46245.Q29BL9"/>
<dbReference type="EnsemblMetazoa" id="FBtr0284337">
    <property type="protein sequence ID" value="FBpp0282775"/>
    <property type="gene ID" value="FBgn0080833"/>
</dbReference>
<dbReference type="KEGG" id="dpo:4800597"/>
<dbReference type="eggNOG" id="KOG2296">
    <property type="taxonomic scope" value="Eukaryota"/>
</dbReference>
<dbReference type="HOGENOM" id="CLU_018886_0_0_1"/>
<dbReference type="InParanoid" id="Q29BL9"/>
<dbReference type="OMA" id="QLERICY"/>
<dbReference type="PhylomeDB" id="Q29BL9"/>
<dbReference type="Proteomes" id="UP000001819">
    <property type="component" value="Chromosome 2"/>
</dbReference>
<dbReference type="Bgee" id="FBgn0080833">
    <property type="expression patterns" value="Expressed in female reproductive system and 2 other cell types or tissues"/>
</dbReference>
<dbReference type="GO" id="GO:0016020">
    <property type="term" value="C:membrane"/>
    <property type="evidence" value="ECO:0007669"/>
    <property type="project" value="UniProtKB-SubCell"/>
</dbReference>
<dbReference type="InterPro" id="IPR051584">
    <property type="entry name" value="GPCR-associated_LMBR1"/>
</dbReference>
<dbReference type="InterPro" id="IPR006876">
    <property type="entry name" value="LMBR1-like_membr_prot"/>
</dbReference>
<dbReference type="PANTHER" id="PTHR21355">
    <property type="entry name" value="G-PROTEIN COUPLED RECEPTOR-ASSOCIATED PROTEIN LMBRD2"/>
    <property type="match status" value="1"/>
</dbReference>
<dbReference type="PANTHER" id="PTHR21355:SF0">
    <property type="entry name" value="G-PROTEIN COUPLED RECEPTOR-ASSOCIATED PROTEIN LMBRD2"/>
    <property type="match status" value="1"/>
</dbReference>
<dbReference type="Pfam" id="PF04791">
    <property type="entry name" value="LMBR1"/>
    <property type="match status" value="1"/>
</dbReference>
<keyword id="KW-0175">Coiled coil</keyword>
<keyword id="KW-0325">Glycoprotein</keyword>
<keyword id="KW-0472">Membrane</keyword>
<keyword id="KW-1185">Reference proteome</keyword>
<keyword id="KW-0812">Transmembrane</keyword>
<keyword id="KW-1133">Transmembrane helix</keyword>